<organism>
    <name type="scientific">Streptococcus mutans serotype c (strain ATCC 700610 / UA159)</name>
    <dbReference type="NCBI Taxonomy" id="210007"/>
    <lineage>
        <taxon>Bacteria</taxon>
        <taxon>Bacillati</taxon>
        <taxon>Bacillota</taxon>
        <taxon>Bacilli</taxon>
        <taxon>Lactobacillales</taxon>
        <taxon>Streptococcaceae</taxon>
        <taxon>Streptococcus</taxon>
    </lineage>
</organism>
<gene>
    <name evidence="1" type="primary">gpsB</name>
    <name type="ordered locus">SMU_471</name>
</gene>
<proteinExistence type="inferred from homology"/>
<protein>
    <recommendedName>
        <fullName evidence="1">Cell cycle protein GpsB</fullName>
    </recommendedName>
    <alternativeName>
        <fullName evidence="1">Guiding PBP1-shuttling protein</fullName>
    </alternativeName>
</protein>
<comment type="function">
    <text evidence="1">Divisome component that associates with the complex late in its assembly, after the Z-ring is formed, and is dependent on DivIC and PBP2B for its recruitment to the divisome. Together with EzrA, is a key component of the system that regulates PBP1 localization during cell cycle progression. Its main role could be the removal of PBP1 from the cell pole after pole maturation is completed. Also contributes to the recruitment of PBP1 to the division complex. Not essential for septum formation.</text>
</comment>
<comment type="subunit">
    <text evidence="1">Forms polymers through the coiled coil domains. Interacts with PBP1, MreC and EzrA.</text>
</comment>
<comment type="subcellular location">
    <subcellularLocation>
        <location evidence="1">Cytoplasm</location>
    </subcellularLocation>
    <text evidence="1">Shuttles between the lateral wall and the division site in a cell cycle-dependent manner.</text>
</comment>
<comment type="similarity">
    <text evidence="1">Belongs to the GpsB family.</text>
</comment>
<feature type="chain" id="PRO_0000337952" description="Cell cycle protein GpsB">
    <location>
        <begin position="1"/>
        <end position="112"/>
    </location>
</feature>
<feature type="coiled-coil region" evidence="1">
    <location>
        <begin position="32"/>
        <end position="75"/>
    </location>
</feature>
<name>GPSB_STRMU</name>
<dbReference type="EMBL" id="AE014133">
    <property type="protein sequence ID" value="AAN58219.1"/>
    <property type="molecule type" value="Genomic_DNA"/>
</dbReference>
<dbReference type="RefSeq" id="NP_720913.1">
    <property type="nucleotide sequence ID" value="NC_004350.2"/>
</dbReference>
<dbReference type="RefSeq" id="WP_002263050.1">
    <property type="nucleotide sequence ID" value="NC_004350.2"/>
</dbReference>
<dbReference type="SMR" id="Q8DVL1"/>
<dbReference type="STRING" id="210007.SMU_471"/>
<dbReference type="GeneID" id="93859960"/>
<dbReference type="KEGG" id="smu:SMU_471"/>
<dbReference type="PATRIC" id="fig|210007.7.peg.413"/>
<dbReference type="eggNOG" id="COG3599">
    <property type="taxonomic scope" value="Bacteria"/>
</dbReference>
<dbReference type="HOGENOM" id="CLU_140309_1_0_9"/>
<dbReference type="OrthoDB" id="389699at2"/>
<dbReference type="PhylomeDB" id="Q8DVL1"/>
<dbReference type="Proteomes" id="UP000002512">
    <property type="component" value="Chromosome"/>
</dbReference>
<dbReference type="GO" id="GO:0005737">
    <property type="term" value="C:cytoplasm"/>
    <property type="evidence" value="ECO:0007669"/>
    <property type="project" value="UniProtKB-SubCell"/>
</dbReference>
<dbReference type="GO" id="GO:0051301">
    <property type="term" value="P:cell division"/>
    <property type="evidence" value="ECO:0007669"/>
    <property type="project" value="UniProtKB-UniRule"/>
</dbReference>
<dbReference type="GO" id="GO:0008360">
    <property type="term" value="P:regulation of cell shape"/>
    <property type="evidence" value="ECO:0007669"/>
    <property type="project" value="UniProtKB-UniRule"/>
</dbReference>
<dbReference type="Gene3D" id="6.10.250.660">
    <property type="match status" value="1"/>
</dbReference>
<dbReference type="HAMAP" id="MF_02011">
    <property type="entry name" value="GpsB"/>
    <property type="match status" value="1"/>
</dbReference>
<dbReference type="InterPro" id="IPR011229">
    <property type="entry name" value="Cell_cycle_GpsB"/>
</dbReference>
<dbReference type="InterPro" id="IPR019933">
    <property type="entry name" value="DivIVA_domain"/>
</dbReference>
<dbReference type="InterPro" id="IPR007793">
    <property type="entry name" value="DivIVA_fam"/>
</dbReference>
<dbReference type="NCBIfam" id="TIGR03544">
    <property type="entry name" value="DivI1A_domain"/>
    <property type="match status" value="1"/>
</dbReference>
<dbReference type="NCBIfam" id="NF010725">
    <property type="entry name" value="PRK14127.1"/>
    <property type="match status" value="1"/>
</dbReference>
<dbReference type="PANTHER" id="PTHR35794:SF1">
    <property type="entry name" value="CELL CYCLE PROTEIN GPSB"/>
    <property type="match status" value="1"/>
</dbReference>
<dbReference type="PANTHER" id="PTHR35794">
    <property type="entry name" value="CELL DIVISION PROTEIN DIVIVA"/>
    <property type="match status" value="1"/>
</dbReference>
<dbReference type="Pfam" id="PF05103">
    <property type="entry name" value="DivIVA"/>
    <property type="match status" value="1"/>
</dbReference>
<dbReference type="PIRSF" id="PIRSF029938">
    <property type="entry name" value="UCP029938"/>
    <property type="match status" value="1"/>
</dbReference>
<reference key="1">
    <citation type="journal article" date="2002" name="Proc. Natl. Acad. Sci. U.S.A.">
        <title>Genome sequence of Streptococcus mutans UA159, a cariogenic dental pathogen.</title>
        <authorList>
            <person name="Ajdic D.J."/>
            <person name="McShan W.M."/>
            <person name="McLaughlin R.E."/>
            <person name="Savic G."/>
            <person name="Chang J."/>
            <person name="Carson M.B."/>
            <person name="Primeaux C."/>
            <person name="Tian R."/>
            <person name="Kenton S."/>
            <person name="Jia H.G."/>
            <person name="Lin S.P."/>
            <person name="Qian Y."/>
            <person name="Li S."/>
            <person name="Zhu H."/>
            <person name="Najar F.Z."/>
            <person name="Lai H."/>
            <person name="White J."/>
            <person name="Roe B.A."/>
            <person name="Ferretti J.J."/>
        </authorList>
    </citation>
    <scope>NUCLEOTIDE SEQUENCE [LARGE SCALE GENOMIC DNA]</scope>
    <source>
        <strain>ATCC 700610 / UA159</strain>
    </source>
</reference>
<keyword id="KW-0131">Cell cycle</keyword>
<keyword id="KW-0132">Cell division</keyword>
<keyword id="KW-0133">Cell shape</keyword>
<keyword id="KW-0175">Coiled coil</keyword>
<keyword id="KW-0963">Cytoplasm</keyword>
<keyword id="KW-1185">Reference proteome</keyword>
<accession>Q8DVL1</accession>
<evidence type="ECO:0000255" key="1">
    <source>
        <dbReference type="HAMAP-Rule" id="MF_02011"/>
    </source>
</evidence>
<sequence length="112" mass="12980">MASIMYTPKDIFEQEFKSSMRGYDKKEVDEFLDDIIKDYETYISTIEELRQENTRLKEEVKQAKKRQEAAQTTVSPAASVSSSRVATTATNFDILKRISRLEKEVFGKQITE</sequence>